<proteinExistence type="inferred from homology"/>
<dbReference type="EC" id="3.2.2.27" evidence="1"/>
<dbReference type="EMBL" id="CR954246">
    <property type="protein sequence ID" value="CAI87609.1"/>
    <property type="molecule type" value="Genomic_DNA"/>
</dbReference>
<dbReference type="SMR" id="Q3IG47"/>
<dbReference type="STRING" id="326442.PSHAa2561"/>
<dbReference type="KEGG" id="pha:PSHAa2561"/>
<dbReference type="PATRIC" id="fig|326442.8.peg.2471"/>
<dbReference type="eggNOG" id="COG0692">
    <property type="taxonomic scope" value="Bacteria"/>
</dbReference>
<dbReference type="HOGENOM" id="CLU_032162_3_1_6"/>
<dbReference type="BioCyc" id="PHAL326442:PSHA_RS12610-MONOMER"/>
<dbReference type="Proteomes" id="UP000006843">
    <property type="component" value="Chromosome I"/>
</dbReference>
<dbReference type="GO" id="GO:0005737">
    <property type="term" value="C:cytoplasm"/>
    <property type="evidence" value="ECO:0007669"/>
    <property type="project" value="UniProtKB-SubCell"/>
</dbReference>
<dbReference type="GO" id="GO:0004844">
    <property type="term" value="F:uracil DNA N-glycosylase activity"/>
    <property type="evidence" value="ECO:0007669"/>
    <property type="project" value="UniProtKB-UniRule"/>
</dbReference>
<dbReference type="GO" id="GO:0097510">
    <property type="term" value="P:base-excision repair, AP site formation via deaminated base removal"/>
    <property type="evidence" value="ECO:0007669"/>
    <property type="project" value="TreeGrafter"/>
</dbReference>
<dbReference type="CDD" id="cd10027">
    <property type="entry name" value="UDG-F1-like"/>
    <property type="match status" value="1"/>
</dbReference>
<dbReference type="FunFam" id="3.40.470.10:FF:000001">
    <property type="entry name" value="Uracil-DNA glycosylase"/>
    <property type="match status" value="1"/>
</dbReference>
<dbReference type="Gene3D" id="3.40.470.10">
    <property type="entry name" value="Uracil-DNA glycosylase-like domain"/>
    <property type="match status" value="1"/>
</dbReference>
<dbReference type="HAMAP" id="MF_00148">
    <property type="entry name" value="UDG"/>
    <property type="match status" value="1"/>
</dbReference>
<dbReference type="InterPro" id="IPR002043">
    <property type="entry name" value="UDG_fam1"/>
</dbReference>
<dbReference type="InterPro" id="IPR018085">
    <property type="entry name" value="Ura-DNA_Glyclase_AS"/>
</dbReference>
<dbReference type="InterPro" id="IPR005122">
    <property type="entry name" value="Uracil-DNA_glycosylase-like"/>
</dbReference>
<dbReference type="InterPro" id="IPR036895">
    <property type="entry name" value="Uracil-DNA_glycosylase-like_sf"/>
</dbReference>
<dbReference type="NCBIfam" id="NF003588">
    <property type="entry name" value="PRK05254.1-1"/>
    <property type="match status" value="1"/>
</dbReference>
<dbReference type="NCBIfam" id="NF003589">
    <property type="entry name" value="PRK05254.1-2"/>
    <property type="match status" value="1"/>
</dbReference>
<dbReference type="NCBIfam" id="NF003591">
    <property type="entry name" value="PRK05254.1-4"/>
    <property type="match status" value="1"/>
</dbReference>
<dbReference type="NCBIfam" id="NF003592">
    <property type="entry name" value="PRK05254.1-5"/>
    <property type="match status" value="1"/>
</dbReference>
<dbReference type="NCBIfam" id="TIGR00628">
    <property type="entry name" value="ung"/>
    <property type="match status" value="1"/>
</dbReference>
<dbReference type="PANTHER" id="PTHR11264">
    <property type="entry name" value="URACIL-DNA GLYCOSYLASE"/>
    <property type="match status" value="1"/>
</dbReference>
<dbReference type="PANTHER" id="PTHR11264:SF0">
    <property type="entry name" value="URACIL-DNA GLYCOSYLASE"/>
    <property type="match status" value="1"/>
</dbReference>
<dbReference type="Pfam" id="PF03167">
    <property type="entry name" value="UDG"/>
    <property type="match status" value="1"/>
</dbReference>
<dbReference type="SMART" id="SM00986">
    <property type="entry name" value="UDG"/>
    <property type="match status" value="1"/>
</dbReference>
<dbReference type="SMART" id="SM00987">
    <property type="entry name" value="UreE_C"/>
    <property type="match status" value="1"/>
</dbReference>
<dbReference type="SUPFAM" id="SSF52141">
    <property type="entry name" value="Uracil-DNA glycosylase-like"/>
    <property type="match status" value="1"/>
</dbReference>
<dbReference type="PROSITE" id="PS00130">
    <property type="entry name" value="U_DNA_GLYCOSYLASE"/>
    <property type="match status" value="1"/>
</dbReference>
<protein>
    <recommendedName>
        <fullName evidence="1">Uracil-DNA glycosylase</fullName>
        <shortName evidence="1">UDG</shortName>
        <ecNumber evidence="1">3.2.2.27</ecNumber>
    </recommendedName>
</protein>
<accession>Q3IG47</accession>
<reference key="1">
    <citation type="journal article" date="2005" name="Genome Res.">
        <title>Coping with cold: the genome of the versatile marine Antarctica bacterium Pseudoalteromonas haloplanktis TAC125.</title>
        <authorList>
            <person name="Medigue C."/>
            <person name="Krin E."/>
            <person name="Pascal G."/>
            <person name="Barbe V."/>
            <person name="Bernsel A."/>
            <person name="Bertin P.N."/>
            <person name="Cheung F."/>
            <person name="Cruveiller S."/>
            <person name="D'Amico S."/>
            <person name="Duilio A."/>
            <person name="Fang G."/>
            <person name="Feller G."/>
            <person name="Ho C."/>
            <person name="Mangenot S."/>
            <person name="Marino G."/>
            <person name="Nilsson J."/>
            <person name="Parrilli E."/>
            <person name="Rocha E.P.C."/>
            <person name="Rouy Z."/>
            <person name="Sekowska A."/>
            <person name="Tutino M.L."/>
            <person name="Vallenet D."/>
            <person name="von Heijne G."/>
            <person name="Danchin A."/>
        </authorList>
    </citation>
    <scope>NUCLEOTIDE SEQUENCE [LARGE SCALE GENOMIC DNA]</scope>
    <source>
        <strain>TAC 125</strain>
    </source>
</reference>
<evidence type="ECO:0000255" key="1">
    <source>
        <dbReference type="HAMAP-Rule" id="MF_00148"/>
    </source>
</evidence>
<gene>
    <name evidence="1" type="primary">ung</name>
    <name type="ordered locus">PSHAa2561</name>
</gene>
<name>UNG_PSET1</name>
<organism>
    <name type="scientific">Pseudoalteromonas translucida (strain TAC 125)</name>
    <dbReference type="NCBI Taxonomy" id="326442"/>
    <lineage>
        <taxon>Bacteria</taxon>
        <taxon>Pseudomonadati</taxon>
        <taxon>Pseudomonadota</taxon>
        <taxon>Gammaproteobacteria</taxon>
        <taxon>Alteromonadales</taxon>
        <taxon>Pseudoalteromonadaceae</taxon>
        <taxon>Pseudoalteromonas</taxon>
    </lineage>
</organism>
<sequence length="220" mass="24609">MSDWTAFLKQELQQAYMQQTLDYVAKRRSEGVAVYPPKDQVFSAFTATQLSDIRVVILGQDPYHGEGQAHGLCFSVLPEVKKLPPSLKNIYKELASDINDFVIPTHGYLQSWAEQGVFLLNTVLTVEQGQAHSHKHLGWEQFTDKVITHINTHCEGVIFILWGAHAQKKGKGIDSARQHILAGPHPSPLSAHRGFFGCRHFSATNALLQSQGKTPINWQV</sequence>
<feature type="chain" id="PRO_1000096598" description="Uracil-DNA glycosylase">
    <location>
        <begin position="1"/>
        <end position="220"/>
    </location>
</feature>
<feature type="active site" description="Proton acceptor" evidence="1">
    <location>
        <position position="61"/>
    </location>
</feature>
<comment type="function">
    <text evidence="1">Excises uracil residues from the DNA which can arise as a result of misincorporation of dUMP residues by DNA polymerase or due to deamination of cytosine.</text>
</comment>
<comment type="catalytic activity">
    <reaction evidence="1">
        <text>Hydrolyzes single-stranded DNA or mismatched double-stranded DNA and polynucleotides, releasing free uracil.</text>
        <dbReference type="EC" id="3.2.2.27"/>
    </reaction>
</comment>
<comment type="subcellular location">
    <subcellularLocation>
        <location evidence="1">Cytoplasm</location>
    </subcellularLocation>
</comment>
<comment type="similarity">
    <text evidence="1">Belongs to the uracil-DNA glycosylase (UDG) superfamily. UNG family.</text>
</comment>
<keyword id="KW-0963">Cytoplasm</keyword>
<keyword id="KW-0227">DNA damage</keyword>
<keyword id="KW-0234">DNA repair</keyword>
<keyword id="KW-0378">Hydrolase</keyword>
<keyword id="KW-1185">Reference proteome</keyword>